<keyword id="KW-0963">Cytoplasm</keyword>
<keyword id="KW-0206">Cytoskeleton</keyword>
<keyword id="KW-0342">GTP-binding</keyword>
<keyword id="KW-0460">Magnesium</keyword>
<keyword id="KW-0479">Metal-binding</keyword>
<keyword id="KW-0493">Microtubule</keyword>
<keyword id="KW-0547">Nucleotide-binding</keyword>
<keyword id="KW-1185">Reference proteome</keyword>
<evidence type="ECO:0000250" key="1">
    <source>
        <dbReference type="UniProtKB" id="P68363"/>
    </source>
</evidence>
<evidence type="ECO:0000250" key="2">
    <source>
        <dbReference type="UniProtKB" id="Q13509"/>
    </source>
</evidence>
<evidence type="ECO:0000256" key="3">
    <source>
        <dbReference type="SAM" id="MobiDB-lite"/>
    </source>
</evidence>
<evidence type="ECO:0000305" key="4"/>
<protein>
    <recommendedName>
        <fullName>Tubulin beta-2 chain</fullName>
    </recommendedName>
    <alternativeName>
        <fullName>Beta-2-tubulin</fullName>
    </alternativeName>
</protein>
<feature type="chain" id="PRO_0000048386" description="Tubulin beta-2 chain">
    <location>
        <begin position="1"/>
        <end position="447"/>
    </location>
</feature>
<feature type="region of interest" description="Disordered" evidence="3">
    <location>
        <begin position="419"/>
        <end position="447"/>
    </location>
</feature>
<feature type="compositionally biased region" description="Polar residues" evidence="3">
    <location>
        <begin position="419"/>
        <end position="428"/>
    </location>
</feature>
<feature type="compositionally biased region" description="Acidic residues" evidence="3">
    <location>
        <begin position="429"/>
        <end position="447"/>
    </location>
</feature>
<feature type="binding site" evidence="2">
    <location>
        <position position="11"/>
    </location>
    <ligand>
        <name>GTP</name>
        <dbReference type="ChEBI" id="CHEBI:37565"/>
    </ligand>
</feature>
<feature type="binding site" evidence="1">
    <location>
        <position position="69"/>
    </location>
    <ligand>
        <name>GTP</name>
        <dbReference type="ChEBI" id="CHEBI:37565"/>
    </ligand>
</feature>
<feature type="binding site" evidence="1">
    <location>
        <position position="69"/>
    </location>
    <ligand>
        <name>Mg(2+)</name>
        <dbReference type="ChEBI" id="CHEBI:18420"/>
    </ligand>
</feature>
<feature type="binding site" evidence="2">
    <location>
        <position position="138"/>
    </location>
    <ligand>
        <name>GTP</name>
        <dbReference type="ChEBI" id="CHEBI:37565"/>
    </ligand>
</feature>
<feature type="binding site" evidence="2">
    <location>
        <position position="142"/>
    </location>
    <ligand>
        <name>GTP</name>
        <dbReference type="ChEBI" id="CHEBI:37565"/>
    </ligand>
</feature>
<feature type="binding site" evidence="2">
    <location>
        <position position="143"/>
    </location>
    <ligand>
        <name>GTP</name>
        <dbReference type="ChEBI" id="CHEBI:37565"/>
    </ligand>
</feature>
<feature type="binding site" evidence="2">
    <location>
        <position position="144"/>
    </location>
    <ligand>
        <name>GTP</name>
        <dbReference type="ChEBI" id="CHEBI:37565"/>
    </ligand>
</feature>
<feature type="binding site" evidence="2">
    <location>
        <position position="204"/>
    </location>
    <ligand>
        <name>GTP</name>
        <dbReference type="ChEBI" id="CHEBI:37565"/>
    </ligand>
</feature>
<feature type="binding site" evidence="2">
    <location>
        <position position="226"/>
    </location>
    <ligand>
        <name>GTP</name>
        <dbReference type="ChEBI" id="CHEBI:37565"/>
    </ligand>
</feature>
<gene>
    <name type="primary">TUBB2</name>
</gene>
<name>TBB2_WHEAT</name>
<dbReference type="EMBL" id="U76745">
    <property type="protein sequence ID" value="AAD10488.1"/>
    <property type="molecule type" value="mRNA"/>
</dbReference>
<dbReference type="SMR" id="Q9ZRB1"/>
<dbReference type="STRING" id="4565.Q9ZRB1"/>
<dbReference type="PaxDb" id="4565-Traes_3AL_6D1917532.2"/>
<dbReference type="eggNOG" id="KOG1375">
    <property type="taxonomic scope" value="Eukaryota"/>
</dbReference>
<dbReference type="Proteomes" id="UP000019116">
    <property type="component" value="Unplaced"/>
</dbReference>
<dbReference type="ExpressionAtlas" id="Q9ZRB1">
    <property type="expression patterns" value="baseline and differential"/>
</dbReference>
<dbReference type="GO" id="GO:0005737">
    <property type="term" value="C:cytoplasm"/>
    <property type="evidence" value="ECO:0000318"/>
    <property type="project" value="GO_Central"/>
</dbReference>
<dbReference type="GO" id="GO:0005874">
    <property type="term" value="C:microtubule"/>
    <property type="evidence" value="ECO:0000318"/>
    <property type="project" value="GO_Central"/>
</dbReference>
<dbReference type="GO" id="GO:0005525">
    <property type="term" value="F:GTP binding"/>
    <property type="evidence" value="ECO:0000318"/>
    <property type="project" value="GO_Central"/>
</dbReference>
<dbReference type="GO" id="GO:0003924">
    <property type="term" value="F:GTPase activity"/>
    <property type="evidence" value="ECO:0007669"/>
    <property type="project" value="InterPro"/>
</dbReference>
<dbReference type="GO" id="GO:0046872">
    <property type="term" value="F:metal ion binding"/>
    <property type="evidence" value="ECO:0007669"/>
    <property type="project" value="UniProtKB-KW"/>
</dbReference>
<dbReference type="GO" id="GO:0005200">
    <property type="term" value="F:structural constituent of cytoskeleton"/>
    <property type="evidence" value="ECO:0000318"/>
    <property type="project" value="GO_Central"/>
</dbReference>
<dbReference type="GO" id="GO:0000226">
    <property type="term" value="P:microtubule cytoskeleton organization"/>
    <property type="evidence" value="ECO:0000318"/>
    <property type="project" value="GO_Central"/>
</dbReference>
<dbReference type="GO" id="GO:0000278">
    <property type="term" value="P:mitotic cell cycle"/>
    <property type="evidence" value="ECO:0000318"/>
    <property type="project" value="GO_Central"/>
</dbReference>
<dbReference type="CDD" id="cd02187">
    <property type="entry name" value="beta_tubulin"/>
    <property type="match status" value="1"/>
</dbReference>
<dbReference type="FunFam" id="1.10.287.600:FF:000006">
    <property type="entry name" value="Tubulin beta chain"/>
    <property type="match status" value="1"/>
</dbReference>
<dbReference type="FunFam" id="3.30.1330.20:FF:000002">
    <property type="entry name" value="Tubulin beta chain"/>
    <property type="match status" value="1"/>
</dbReference>
<dbReference type="FunFam" id="3.40.50.1440:FF:000005">
    <property type="entry name" value="Tubulin beta chain"/>
    <property type="match status" value="1"/>
</dbReference>
<dbReference type="Gene3D" id="1.10.287.600">
    <property type="entry name" value="Helix hairpin bin"/>
    <property type="match status" value="1"/>
</dbReference>
<dbReference type="Gene3D" id="3.30.1330.20">
    <property type="entry name" value="Tubulin/FtsZ, C-terminal domain"/>
    <property type="match status" value="1"/>
</dbReference>
<dbReference type="Gene3D" id="3.40.50.1440">
    <property type="entry name" value="Tubulin/FtsZ, GTPase domain"/>
    <property type="match status" value="1"/>
</dbReference>
<dbReference type="InterPro" id="IPR013838">
    <property type="entry name" value="Beta-tubulin_BS"/>
</dbReference>
<dbReference type="InterPro" id="IPR002453">
    <property type="entry name" value="Beta_tubulin"/>
</dbReference>
<dbReference type="InterPro" id="IPR008280">
    <property type="entry name" value="Tub_FtsZ_C"/>
</dbReference>
<dbReference type="InterPro" id="IPR000217">
    <property type="entry name" value="Tubulin"/>
</dbReference>
<dbReference type="InterPro" id="IPR037103">
    <property type="entry name" value="Tubulin/FtsZ-like_C"/>
</dbReference>
<dbReference type="InterPro" id="IPR018316">
    <property type="entry name" value="Tubulin/FtsZ_2-layer-sand-dom"/>
</dbReference>
<dbReference type="InterPro" id="IPR036525">
    <property type="entry name" value="Tubulin/FtsZ_GTPase_sf"/>
</dbReference>
<dbReference type="InterPro" id="IPR023123">
    <property type="entry name" value="Tubulin_C"/>
</dbReference>
<dbReference type="InterPro" id="IPR017975">
    <property type="entry name" value="Tubulin_CS"/>
</dbReference>
<dbReference type="InterPro" id="IPR003008">
    <property type="entry name" value="Tubulin_FtsZ_GTPase"/>
</dbReference>
<dbReference type="PANTHER" id="PTHR11588">
    <property type="entry name" value="TUBULIN"/>
    <property type="match status" value="1"/>
</dbReference>
<dbReference type="Pfam" id="PF00091">
    <property type="entry name" value="Tubulin"/>
    <property type="match status" value="1"/>
</dbReference>
<dbReference type="Pfam" id="PF03953">
    <property type="entry name" value="Tubulin_C"/>
    <property type="match status" value="1"/>
</dbReference>
<dbReference type="PRINTS" id="PR01163">
    <property type="entry name" value="BETATUBULIN"/>
</dbReference>
<dbReference type="PRINTS" id="PR01161">
    <property type="entry name" value="TUBULIN"/>
</dbReference>
<dbReference type="SMART" id="SM00864">
    <property type="entry name" value="Tubulin"/>
    <property type="match status" value="1"/>
</dbReference>
<dbReference type="SMART" id="SM00865">
    <property type="entry name" value="Tubulin_C"/>
    <property type="match status" value="1"/>
</dbReference>
<dbReference type="SUPFAM" id="SSF55307">
    <property type="entry name" value="Tubulin C-terminal domain-like"/>
    <property type="match status" value="1"/>
</dbReference>
<dbReference type="SUPFAM" id="SSF52490">
    <property type="entry name" value="Tubulin nucleotide-binding domain-like"/>
    <property type="match status" value="1"/>
</dbReference>
<dbReference type="PROSITE" id="PS00227">
    <property type="entry name" value="TUBULIN"/>
    <property type="match status" value="1"/>
</dbReference>
<dbReference type="PROSITE" id="PS00228">
    <property type="entry name" value="TUBULIN_B_AUTOREG"/>
    <property type="match status" value="1"/>
</dbReference>
<proteinExistence type="evidence at transcript level"/>
<reference key="1">
    <citation type="submission" date="1996-10" db="EMBL/GenBank/DDBJ databases">
        <title>Tubb2, a beta-tubulin cDNA from common wheat.</title>
        <authorList>
            <person name="Segal G."/>
            <person name="Feldman M."/>
        </authorList>
    </citation>
    <scope>NUCLEOTIDE SEQUENCE [MRNA]</scope>
    <source>
        <strain>cv. Chinese Spring</strain>
        <tissue>Root tip</tissue>
    </source>
</reference>
<organism>
    <name type="scientific">Triticum aestivum</name>
    <name type="common">Wheat</name>
    <dbReference type="NCBI Taxonomy" id="4565"/>
    <lineage>
        <taxon>Eukaryota</taxon>
        <taxon>Viridiplantae</taxon>
        <taxon>Streptophyta</taxon>
        <taxon>Embryophyta</taxon>
        <taxon>Tracheophyta</taxon>
        <taxon>Spermatophyta</taxon>
        <taxon>Magnoliopsida</taxon>
        <taxon>Liliopsida</taxon>
        <taxon>Poales</taxon>
        <taxon>Poaceae</taxon>
        <taxon>BOP clade</taxon>
        <taxon>Pooideae</taxon>
        <taxon>Triticodae</taxon>
        <taxon>Triticeae</taxon>
        <taxon>Triticinae</taxon>
        <taxon>Triticum</taxon>
    </lineage>
</organism>
<comment type="function">
    <text>Tubulin is the major constituent of microtubules, a cylinder consisting of laterally associated linear protofilaments composed of alpha- and beta-tubulin heterodimers. Microtubules grow by the addition of GTP-tubulin dimers to the microtubule end, where a stabilizing cap forms. Below the cap, tubulin dimers are in GDP-bound state, owing to GTPase activity of alpha-tubulin.</text>
</comment>
<comment type="cofactor">
    <cofactor evidence="1">
        <name>Mg(2+)</name>
        <dbReference type="ChEBI" id="CHEBI:18420"/>
    </cofactor>
</comment>
<comment type="subunit">
    <text>Dimer of alpha and beta chains. A typical microtubule is a hollow water-filled tube with an outer diameter of 25 nm and an inner diameter of 15 nM. Alpha-beta heterodimers associate head-to-tail to form protofilaments running lengthwise along the microtubule wall with the beta-tubulin subunit facing the microtubule plus end conferring a structural polarity. Microtubules usually have 13 protofilaments but different protofilament numbers can be found in some organisms and specialized cells.</text>
</comment>
<comment type="subcellular location">
    <subcellularLocation>
        <location>Cytoplasm</location>
        <location>Cytoskeleton</location>
    </subcellularLocation>
</comment>
<comment type="similarity">
    <text evidence="4">Belongs to the tubulin family.</text>
</comment>
<accession>Q9ZRB1</accession>
<sequence length="447" mass="50266">MREILHIQGGQCGNQIGAKFWEVVCDEHGIDPTGRYTGTSDLQLERVNVYYNEASCGRFVPRAVLMDLEPGTMDSVRTGPYGQIFRPDNFVFGQSGAGNNWAKGHYTEGAELIDSVLDVVRKEAENCDCLQGFQVCHSLGGGTGSGMGTLLISKIREEYPDRMMLTFSVFPSPKVSDTVVEPYNATLSVHQLVENADECMVLDNEALYDICFRTLKLTTPSFGDLNHLISATMSGVTCCLRFPGQLNSDLRKLAVNLIPFPRLHFFMVGFAPLTSRGSQQYRALTVPELTQQMWDAKNMMCAADPRHGRYLTASAMFRGKMSTKEVDEQMINVQNKNSSYFVEWIPNNVKSSVCDIPPTGLSMASTFVGNSTSIQEMFRRVSEQFTSMFRRKAFLHWYTGEGMDEMEFTEAESNMNDLVSEYQQYQDATSDEEGEYEDEDQEPEEDM</sequence>